<gene>
    <name type="primary">AGL31</name>
    <name type="synonym">MAF2</name>
    <name type="ordered locus">At5g65050</name>
    <name type="ORF">MXK3.30</name>
</gene>
<feature type="chain" id="PRO_0000199478" description="Agamous-like MADS-box protein AGL31">
    <location>
        <begin position="1"/>
        <end position="196"/>
    </location>
</feature>
<feature type="domain" description="MADS-box" evidence="1">
    <location>
        <begin position="1"/>
        <end position="61"/>
    </location>
</feature>
<feature type="domain" description="K-box" evidence="2">
    <location>
        <begin position="80"/>
        <end position="170"/>
    </location>
</feature>
<feature type="splice variant" id="VSP_012791" description="In isoform 1." evidence="11">
    <original>GKKTFLVIEGDRGM</original>
    <variation>TKTSLEANSSVDTQ</variation>
    <location>
        <begin position="165"/>
        <end position="178"/>
    </location>
</feature>
<feature type="splice variant" id="VSP_012792" description="In isoform 1." evidence="11">
    <location>
        <begin position="179"/>
        <end position="196"/>
    </location>
</feature>
<evidence type="ECO:0000255" key="1">
    <source>
        <dbReference type="PROSITE-ProRule" id="PRU00251"/>
    </source>
</evidence>
<evidence type="ECO:0000255" key="2">
    <source>
        <dbReference type="PROSITE-ProRule" id="PRU00629"/>
    </source>
</evidence>
<evidence type="ECO:0000269" key="3">
    <source>
    </source>
</evidence>
<evidence type="ECO:0000269" key="4">
    <source>
    </source>
</evidence>
<evidence type="ECO:0000269" key="5">
    <source>
    </source>
</evidence>
<evidence type="ECO:0000269" key="6">
    <source>
    </source>
</evidence>
<evidence type="ECO:0000269" key="7">
    <source>
    </source>
</evidence>
<evidence type="ECO:0000269" key="8">
    <source>
    </source>
</evidence>
<evidence type="ECO:0000269" key="9">
    <source>
    </source>
</evidence>
<evidence type="ECO:0000269" key="10">
    <source>
    </source>
</evidence>
<evidence type="ECO:0000303" key="11">
    <source>
    </source>
</evidence>
<sequence length="196" mass="22061">MGRKKVEIKRIENKSSRQVTFSKRRNGLIEKARQLSILCESSIAVLVVSGSGKLYKSASGDNMSKIIDRYEIHHADELEALDLAEKTRNYLPLKELLEIVQSKLEESNVDNASVDTLISLEEQLETALSVTRARKTELMMGEVKSLQKTENLLREENQTLASQVGKKTFLVIEGDRGMSWENGSGNKVRETLPLLK</sequence>
<reference key="1">
    <citation type="journal article" date="2000" name="Plant J.">
        <title>MADS-box gene evolution beyond flowers: expression in pollen, endosperm, guard cells, roots and trichomes.</title>
        <authorList>
            <person name="Alvarez-Buylla E.R."/>
            <person name="Liljegren S.J."/>
            <person name="Pelaz S."/>
            <person name="Gold S.E."/>
            <person name="Burgeff C."/>
            <person name="Ditta G.S."/>
            <person name="Vergara-Silva F."/>
            <person name="Yanofsky M.F."/>
        </authorList>
    </citation>
    <scope>NUCLEOTIDE SEQUENCE [MRNA] (ISOFORM 1)</scope>
    <scope>TISSUE SPECIFICITY</scope>
    <source>
        <strain>cv. Columbia</strain>
    </source>
</reference>
<reference key="2">
    <citation type="journal article" date="2003" name="Plant Cell">
        <title>Molecular and phylogenetic analyses of the complete MADS-box transcription factor family in Arabidopsis: new openings to the MADS world.</title>
        <authorList>
            <person name="Parenicova L."/>
            <person name="de Folter S."/>
            <person name="Kieffer M."/>
            <person name="Horner D.S."/>
            <person name="Favalli C."/>
            <person name="Busscher J."/>
            <person name="Cook H.E."/>
            <person name="Ingram R.M."/>
            <person name="Kater M.M."/>
            <person name="Davies B."/>
            <person name="Angenent G.C."/>
            <person name="Colombo L."/>
        </authorList>
    </citation>
    <scope>NUCLEOTIDE SEQUENCE [MRNA] (ISOFORM 2)</scope>
    <scope>TISSUE SPECIFICITY</scope>
    <scope>GENE FAMILY</scope>
    <source>
        <strain>cv. Columbia</strain>
        <tissue>Flower</tissue>
    </source>
</reference>
<reference key="3">
    <citation type="journal article" date="2003" name="Plant Cell">
        <title>Analysis of the Arabidopsis MADS AFFECTING FLOWERING gene family: MAF2 prevents vernalization by short periods of cold.</title>
        <authorList>
            <person name="Ratcliffe O.J."/>
            <person name="Kumimoto R.W."/>
            <person name="Wong B.J."/>
            <person name="Riechmann J.L."/>
        </authorList>
    </citation>
    <scope>NUCLEOTIDE SEQUENCE [MRNA] (ISOFORM 2)</scope>
    <scope>FUNCTION</scope>
</reference>
<reference key="4">
    <citation type="submission" date="1999-04" db="EMBL/GenBank/DDBJ databases">
        <title>Structural analysis of Arabidopsis thaliana chromosome 5. XI.</title>
        <authorList>
            <person name="Kaneko T."/>
            <person name="Katoh T."/>
            <person name="Asamizu E."/>
            <person name="Sato S."/>
            <person name="Nakamura Y."/>
            <person name="Kotani H."/>
            <person name="Tabata S."/>
        </authorList>
    </citation>
    <scope>NUCLEOTIDE SEQUENCE [LARGE SCALE GENOMIC DNA]</scope>
    <source>
        <strain>cv. Columbia</strain>
    </source>
</reference>
<reference key="5">
    <citation type="journal article" date="2000" name="DNA Res.">
        <title>Structural analysis of Arabidopsis thaliana chromosome 5. X. Sequence features of the regions of 3,076,755 bp covered by sixty P1 and TAC clones.</title>
        <authorList>
            <person name="Sato S."/>
            <person name="Nakamura Y."/>
            <person name="Kaneko T."/>
            <person name="Katoh T."/>
            <person name="Asamizu E."/>
            <person name="Kotani H."/>
            <person name="Tabata S."/>
        </authorList>
    </citation>
    <scope>NUCLEOTIDE SEQUENCE [LARGE SCALE GENOMIC DNA]</scope>
    <source>
        <strain>cv. Columbia</strain>
    </source>
</reference>
<reference key="6">
    <citation type="journal article" date="2017" name="Plant J.">
        <title>Araport11: a complete reannotation of the Arabidopsis thaliana reference genome.</title>
        <authorList>
            <person name="Cheng C.Y."/>
            <person name="Krishnakumar V."/>
            <person name="Chan A.P."/>
            <person name="Thibaud-Nissen F."/>
            <person name="Schobel S."/>
            <person name="Town C.D."/>
        </authorList>
    </citation>
    <scope>GENOME REANNOTATION</scope>
    <source>
        <strain>cv. Columbia</strain>
    </source>
</reference>
<reference key="7">
    <citation type="journal article" date="2009" name="Mol. Biol. Evol.">
        <title>Complex rearrangements lead to novel chimeric gene fusion polymorphisms at the Arabidopsis thaliana MAF2-5 flowering time gene cluster.</title>
        <authorList>
            <person name="Caicedo A.L."/>
            <person name="Richards C."/>
            <person name="Ehrenreich I.M."/>
            <person name="Purugganan M.D."/>
        </authorList>
    </citation>
    <scope>NUCLEOTIDE SEQUENCE [GENOMIC DNA] OF 1-149 (ISOFORM 1/2)</scope>
    <scope>FUNCTION</scope>
</reference>
<reference key="8">
    <citation type="journal article" date="2003" name="Mol. Biol. Evol.">
        <title>Evolution and divergence of the MADS-box gene family based on genome-wide expression analyses.</title>
        <authorList>
            <person name="Kofuji R."/>
            <person name="Sumikawa N."/>
            <person name="Yamasaki M."/>
            <person name="Kondo K."/>
            <person name="Ueda K."/>
            <person name="Ito M."/>
            <person name="Hasebe M."/>
        </authorList>
    </citation>
    <scope>TISSUE SPECIFICITY</scope>
    <scope>GENE FAMILY</scope>
    <source>
        <strain>cv. Columbia</strain>
    </source>
</reference>
<reference key="9">
    <citation type="journal article" date="2004" name="Genes Dev.">
        <title>PAF1-complex-mediated histone methylation of FLOWERING LOCUS C chromatin is required for the vernalization-responsive, winter-annual habit in Arabidopsis.</title>
        <authorList>
            <person name="He Y."/>
            <person name="Doyle M.R."/>
            <person name="Amasino R.M."/>
        </authorList>
    </citation>
    <scope>INDUCTION BY ELF7 AND ELF8</scope>
</reference>
<reference key="10">
    <citation type="journal article" date="2005" name="Plant J.">
        <title>HUA2 is required for the expression of floral repressors in Arabidopsis thaliana.</title>
        <authorList>
            <person name="Doyle M.R."/>
            <person name="Bizzell C.M."/>
            <person name="Keller M.R."/>
            <person name="Michaels S.D."/>
            <person name="Song J."/>
            <person name="Noh Y.-S."/>
            <person name="Amasino R.M."/>
        </authorList>
    </citation>
    <scope>INDUCTION BY HUA2</scope>
</reference>
<reference key="11">
    <citation type="journal article" date="2008" name="J. Exp. Bot.">
        <title>FLC or not FLC: the other side of vernalization.</title>
        <authorList>
            <person name="Alexandre C.M."/>
            <person name="Hennig L."/>
        </authorList>
    </citation>
    <scope>REVIEW</scope>
</reference>
<reference key="12">
    <citation type="journal article" date="2010" name="Genetics">
        <title>Natural diversity in flowering responses of Arabidopsis thaliana caused by variation in a tandem gene array.</title>
        <authorList>
            <person name="Rosloski S.M."/>
            <person name="Jali S.S."/>
            <person name="Balasubramanian S."/>
            <person name="Weigel D."/>
            <person name="Grbic V."/>
        </authorList>
    </citation>
    <scope>FUNCTION</scope>
    <scope>DISRUPTION PHENOTYPE</scope>
    <source>
        <strain>cv. Columbia</strain>
    </source>
</reference>
<accession>Q9FPN7</accession>
<accession>C0J8M2</accession>
<accession>Q84NB5</accession>
<accession>Q9FGD9</accession>
<name>AGL31_ARATH</name>
<keyword id="KW-0025">Alternative splicing</keyword>
<keyword id="KW-0217">Developmental protein</keyword>
<keyword id="KW-0221">Differentiation</keyword>
<keyword id="KW-0238">DNA-binding</keyword>
<keyword id="KW-0287">Flowering</keyword>
<keyword id="KW-0539">Nucleus</keyword>
<keyword id="KW-1185">Reference proteome</keyword>
<keyword id="KW-0678">Repressor</keyword>
<keyword id="KW-0804">Transcription</keyword>
<keyword id="KW-0805">Transcription regulation</keyword>
<organism>
    <name type="scientific">Arabidopsis thaliana</name>
    <name type="common">Mouse-ear cress</name>
    <dbReference type="NCBI Taxonomy" id="3702"/>
    <lineage>
        <taxon>Eukaryota</taxon>
        <taxon>Viridiplantae</taxon>
        <taxon>Streptophyta</taxon>
        <taxon>Embryophyta</taxon>
        <taxon>Tracheophyta</taxon>
        <taxon>Spermatophyta</taxon>
        <taxon>Magnoliopsida</taxon>
        <taxon>eudicotyledons</taxon>
        <taxon>Gunneridae</taxon>
        <taxon>Pentapetalae</taxon>
        <taxon>rosids</taxon>
        <taxon>malvids</taxon>
        <taxon>Brassicales</taxon>
        <taxon>Brassicaceae</taxon>
        <taxon>Camelineae</taxon>
        <taxon>Arabidopsis</taxon>
    </lineage>
</organism>
<protein>
    <recommendedName>
        <fullName>Agamous-like MADS-box protein AGL31</fullName>
    </recommendedName>
    <alternativeName>
        <fullName>Protein MADS AFFECTING FLOWERING 2</fullName>
    </alternativeName>
</protein>
<dbReference type="EMBL" id="AF312667">
    <property type="protein sequence ID" value="AAG37904.1"/>
    <property type="molecule type" value="mRNA"/>
</dbReference>
<dbReference type="EMBL" id="AY141211">
    <property type="protein sequence ID" value="AAN52775.1"/>
    <property type="molecule type" value="mRNA"/>
</dbReference>
<dbReference type="EMBL" id="AY231441">
    <property type="protein sequence ID" value="AAO65307.1"/>
    <property type="molecule type" value="mRNA"/>
</dbReference>
<dbReference type="EMBL" id="AB026633">
    <property type="protein sequence ID" value="BAB10332.1"/>
    <property type="molecule type" value="Genomic_DNA"/>
</dbReference>
<dbReference type="EMBL" id="AB019236">
    <property type="protein sequence ID" value="BAB10332.1"/>
    <property type="status" value="JOINED"/>
    <property type="molecule type" value="Genomic_DNA"/>
</dbReference>
<dbReference type="EMBL" id="CP002688">
    <property type="protein sequence ID" value="AED97991.1"/>
    <property type="molecule type" value="Genomic_DNA"/>
</dbReference>
<dbReference type="EMBL" id="CP002688">
    <property type="protein sequence ID" value="AED97992.1"/>
    <property type="molecule type" value="Genomic_DNA"/>
</dbReference>
<dbReference type="EMBL" id="EU980623">
    <property type="protein sequence ID" value="ACL93430.1"/>
    <property type="molecule type" value="Genomic_DNA"/>
</dbReference>
<dbReference type="EMBL" id="EU980627">
    <property type="protein sequence ID" value="ACL93446.1"/>
    <property type="molecule type" value="Genomic_DNA"/>
</dbReference>
<dbReference type="RefSeq" id="NP_001078798.1">
    <molecule id="Q9FPN7-2"/>
    <property type="nucleotide sequence ID" value="NM_001085329.1"/>
</dbReference>
<dbReference type="RefSeq" id="NP_001119498.1">
    <molecule id="Q9FPN7-1"/>
    <property type="nucleotide sequence ID" value="NM_001126026.2"/>
</dbReference>
<dbReference type="SMR" id="Q9FPN7"/>
<dbReference type="BioGRID" id="21871">
    <property type="interactions" value="3"/>
</dbReference>
<dbReference type="FunCoup" id="Q9FPN7">
    <property type="interactions" value="145"/>
</dbReference>
<dbReference type="STRING" id="3702.Q9FPN7"/>
<dbReference type="iPTMnet" id="Q9FPN7"/>
<dbReference type="PaxDb" id="3702-AT5G65050.3"/>
<dbReference type="ProteomicsDB" id="244834">
    <molecule id="Q9FPN7-1"/>
</dbReference>
<dbReference type="EnsemblPlants" id="AT5G65050.2">
    <molecule id="Q9FPN7-2"/>
    <property type="protein sequence ID" value="AT5G65050.2"/>
    <property type="gene ID" value="AT5G65050"/>
</dbReference>
<dbReference type="EnsemblPlants" id="AT5G65050.3">
    <molecule id="Q9FPN7-1"/>
    <property type="protein sequence ID" value="AT5G65050.3"/>
    <property type="gene ID" value="AT5G65050"/>
</dbReference>
<dbReference type="GeneID" id="836629"/>
<dbReference type="Gramene" id="AT5G65050.2">
    <molecule id="Q9FPN7-2"/>
    <property type="protein sequence ID" value="AT5G65050.2"/>
    <property type="gene ID" value="AT5G65050"/>
</dbReference>
<dbReference type="Gramene" id="AT5G65050.3">
    <molecule id="Q9FPN7-1"/>
    <property type="protein sequence ID" value="AT5G65050.3"/>
    <property type="gene ID" value="AT5G65050"/>
</dbReference>
<dbReference type="KEGG" id="ath:AT5G65050"/>
<dbReference type="Araport" id="AT5G65050"/>
<dbReference type="TAIR" id="AT5G65050">
    <property type="gene designation" value="AGL31"/>
</dbReference>
<dbReference type="eggNOG" id="KOG0014">
    <property type="taxonomic scope" value="Eukaryota"/>
</dbReference>
<dbReference type="HOGENOM" id="CLU_053053_0_4_1"/>
<dbReference type="InParanoid" id="Q9FPN7"/>
<dbReference type="OMA" id="NMTNIVD"/>
<dbReference type="OrthoDB" id="1898716at2759"/>
<dbReference type="PhylomeDB" id="Q9FPN7"/>
<dbReference type="PRO" id="PR:Q9FPN7"/>
<dbReference type="Proteomes" id="UP000006548">
    <property type="component" value="Chromosome 5"/>
</dbReference>
<dbReference type="ExpressionAtlas" id="Q9FPN7">
    <property type="expression patterns" value="baseline and differential"/>
</dbReference>
<dbReference type="GO" id="GO:0005634">
    <property type="term" value="C:nucleus"/>
    <property type="evidence" value="ECO:0007005"/>
    <property type="project" value="TAIR"/>
</dbReference>
<dbReference type="GO" id="GO:0003700">
    <property type="term" value="F:DNA-binding transcription factor activity"/>
    <property type="evidence" value="ECO:0000250"/>
    <property type="project" value="TAIR"/>
</dbReference>
<dbReference type="GO" id="GO:0046983">
    <property type="term" value="F:protein dimerization activity"/>
    <property type="evidence" value="ECO:0007669"/>
    <property type="project" value="InterPro"/>
</dbReference>
<dbReference type="GO" id="GO:0000977">
    <property type="term" value="F:RNA polymerase II transcription regulatory region sequence-specific DNA binding"/>
    <property type="evidence" value="ECO:0007669"/>
    <property type="project" value="InterPro"/>
</dbReference>
<dbReference type="GO" id="GO:0030154">
    <property type="term" value="P:cell differentiation"/>
    <property type="evidence" value="ECO:0007669"/>
    <property type="project" value="UniProtKB-KW"/>
</dbReference>
<dbReference type="GO" id="GO:0009908">
    <property type="term" value="P:flower development"/>
    <property type="evidence" value="ECO:0007669"/>
    <property type="project" value="UniProtKB-KW"/>
</dbReference>
<dbReference type="GO" id="GO:0009910">
    <property type="term" value="P:negative regulation of flower development"/>
    <property type="evidence" value="ECO:0000315"/>
    <property type="project" value="TAIR"/>
</dbReference>
<dbReference type="GO" id="GO:0010221">
    <property type="term" value="P:negative regulation of vernalization response"/>
    <property type="evidence" value="ECO:0000315"/>
    <property type="project" value="TAIR"/>
</dbReference>
<dbReference type="GO" id="GO:0045944">
    <property type="term" value="P:positive regulation of transcription by RNA polymerase II"/>
    <property type="evidence" value="ECO:0007669"/>
    <property type="project" value="InterPro"/>
</dbReference>
<dbReference type="GO" id="GO:0006355">
    <property type="term" value="P:regulation of DNA-templated transcription"/>
    <property type="evidence" value="ECO:0000304"/>
    <property type="project" value="TAIR"/>
</dbReference>
<dbReference type="GO" id="GO:0010048">
    <property type="term" value="P:vernalization response"/>
    <property type="evidence" value="ECO:0000315"/>
    <property type="project" value="TAIR"/>
</dbReference>
<dbReference type="CDD" id="cd00265">
    <property type="entry name" value="MADS_MEF2_like"/>
    <property type="match status" value="1"/>
</dbReference>
<dbReference type="FunFam" id="3.40.1810.10:FF:000020">
    <property type="entry name" value="MADS-box protein FLOWERING LOCUS C"/>
    <property type="match status" value="1"/>
</dbReference>
<dbReference type="Gene3D" id="3.40.1810.10">
    <property type="entry name" value="Transcription factor, MADS-box"/>
    <property type="match status" value="1"/>
</dbReference>
<dbReference type="InterPro" id="IPR050142">
    <property type="entry name" value="MADS-box/MEF2_TF"/>
</dbReference>
<dbReference type="InterPro" id="IPR033896">
    <property type="entry name" value="MEF2-like_N"/>
</dbReference>
<dbReference type="InterPro" id="IPR002487">
    <property type="entry name" value="TF_Kbox"/>
</dbReference>
<dbReference type="InterPro" id="IPR002100">
    <property type="entry name" value="TF_MADSbox"/>
</dbReference>
<dbReference type="InterPro" id="IPR036879">
    <property type="entry name" value="TF_MADSbox_sf"/>
</dbReference>
<dbReference type="PANTHER" id="PTHR48019">
    <property type="entry name" value="SERUM RESPONSE FACTOR HOMOLOG"/>
    <property type="match status" value="1"/>
</dbReference>
<dbReference type="Pfam" id="PF01486">
    <property type="entry name" value="K-box"/>
    <property type="match status" value="1"/>
</dbReference>
<dbReference type="Pfam" id="PF00319">
    <property type="entry name" value="SRF-TF"/>
    <property type="match status" value="1"/>
</dbReference>
<dbReference type="PRINTS" id="PR00404">
    <property type="entry name" value="MADSDOMAIN"/>
</dbReference>
<dbReference type="SMART" id="SM00432">
    <property type="entry name" value="MADS"/>
    <property type="match status" value="1"/>
</dbReference>
<dbReference type="SUPFAM" id="SSF55455">
    <property type="entry name" value="SRF-like"/>
    <property type="match status" value="1"/>
</dbReference>
<dbReference type="PROSITE" id="PS51297">
    <property type="entry name" value="K_BOX"/>
    <property type="match status" value="1"/>
</dbReference>
<dbReference type="PROSITE" id="PS00350">
    <property type="entry name" value="MADS_BOX_1"/>
    <property type="match status" value="1"/>
</dbReference>
<dbReference type="PROSITE" id="PS50066">
    <property type="entry name" value="MADS_BOX_2"/>
    <property type="match status" value="1"/>
</dbReference>
<proteinExistence type="evidence at transcript level"/>
<comment type="function">
    <text evidence="4 9 10">Probable transcription factor that prevents vernalization by short periods of cold. Acts as a floral repressor.</text>
</comment>
<comment type="subcellular location">
    <subcellularLocation>
        <location evidence="1">Nucleus</location>
    </subcellularLocation>
</comment>
<comment type="alternative products">
    <event type="alternative splicing"/>
    <isoform>
        <id>Q9FPN7-1</id>
        <name>2</name>
        <name>AGL31-II</name>
        <sequence type="displayed"/>
    </isoform>
    <isoform>
        <id>Q9FPN7-2</id>
        <name>1</name>
        <sequence type="described" ref="VSP_012791 VSP_012792"/>
    </isoform>
</comment>
<comment type="tissue specificity">
    <text evidence="3 5 6">Expressed in most plant tissues, roots, seedlings, leaves, stems, inflorescences, pollen, siliques and flowers.</text>
</comment>
<comment type="induction">
    <text evidence="7 8">Requires EARLY FLOWERING 7 (ELF7) and ELF8 to be expressed. Up-regulated by HUA2.</text>
</comment>
<comment type="disruption phenotype">
    <text evidence="10">Early flowering.</text>
</comment>
<comment type="miscellaneous">
    <text>Complex rearrangements within the MAF2-5 gene cluster plays a role in the variation of the flowering time, an ecologically important variable phenotype.</text>
</comment>